<dbReference type="EC" id="2.4.1.121"/>
<dbReference type="EMBL" id="L34847">
    <property type="protein sequence ID" value="AAA59054.1"/>
    <property type="molecule type" value="mRNA"/>
</dbReference>
<dbReference type="PIR" id="A54739">
    <property type="entry name" value="A54739"/>
</dbReference>
<dbReference type="RefSeq" id="NP_001105326.1">
    <property type="nucleotide sequence ID" value="NM_001111856.1"/>
</dbReference>
<dbReference type="SMR" id="Q41819"/>
<dbReference type="FunCoup" id="Q41819">
    <property type="interactions" value="4"/>
</dbReference>
<dbReference type="STRING" id="4577.Q41819"/>
<dbReference type="CAZy" id="GT1">
    <property type="family name" value="Glycosyltransferase Family 1"/>
</dbReference>
<dbReference type="PaxDb" id="4577-GRMZM2G024131_P01"/>
<dbReference type="EnsemblPlants" id="Zm00001eb053690_T001">
    <property type="protein sequence ID" value="Zm00001eb053690_P001"/>
    <property type="gene ID" value="Zm00001eb053690"/>
</dbReference>
<dbReference type="EnsemblPlants" id="Zm00001eb053690_T002">
    <property type="protein sequence ID" value="Zm00001eb053690_P002"/>
    <property type="gene ID" value="Zm00001eb053690"/>
</dbReference>
<dbReference type="GeneID" id="542250"/>
<dbReference type="Gramene" id="Zm00001eb053690_T001">
    <property type="protein sequence ID" value="Zm00001eb053690_P001"/>
    <property type="gene ID" value="Zm00001eb053690"/>
</dbReference>
<dbReference type="Gramene" id="Zm00001eb053690_T002">
    <property type="protein sequence ID" value="Zm00001eb053690_P002"/>
    <property type="gene ID" value="Zm00001eb053690"/>
</dbReference>
<dbReference type="KEGG" id="zma:542250"/>
<dbReference type="MaizeGDB" id="83603"/>
<dbReference type="eggNOG" id="KOG1192">
    <property type="taxonomic scope" value="Eukaryota"/>
</dbReference>
<dbReference type="HOGENOM" id="CLU_001724_0_1_1"/>
<dbReference type="InParanoid" id="Q41819"/>
<dbReference type="OMA" id="PEDTCMQ"/>
<dbReference type="OrthoDB" id="5835829at2759"/>
<dbReference type="UniPathway" id="UPA00376"/>
<dbReference type="Proteomes" id="UP000007305">
    <property type="component" value="Chromosome 1"/>
</dbReference>
<dbReference type="ExpressionAtlas" id="Q41819">
    <property type="expression patterns" value="baseline and differential"/>
</dbReference>
<dbReference type="GO" id="GO:0005737">
    <property type="term" value="C:cytoplasm"/>
    <property type="evidence" value="ECO:0000318"/>
    <property type="project" value="GO_Central"/>
</dbReference>
<dbReference type="GO" id="GO:0047215">
    <property type="term" value="F:indole-3-acetate beta-glucosyltransferase activity"/>
    <property type="evidence" value="ECO:0007669"/>
    <property type="project" value="UniProtKB-EC"/>
</dbReference>
<dbReference type="GO" id="GO:0080043">
    <property type="term" value="F:quercetin 3-O-glucosyltransferase activity"/>
    <property type="evidence" value="ECO:0000318"/>
    <property type="project" value="GO_Central"/>
</dbReference>
<dbReference type="GO" id="GO:0080044">
    <property type="term" value="F:quercetin 7-O-glucosyltransferase activity"/>
    <property type="evidence" value="ECO:0000318"/>
    <property type="project" value="GO_Central"/>
</dbReference>
<dbReference type="CDD" id="cd03784">
    <property type="entry name" value="GT1_Gtf-like"/>
    <property type="match status" value="1"/>
</dbReference>
<dbReference type="FunFam" id="3.40.50.2000:FF:000078">
    <property type="entry name" value="Glycosyltransferase"/>
    <property type="match status" value="1"/>
</dbReference>
<dbReference type="Gene3D" id="3.40.50.2000">
    <property type="entry name" value="Glycogen Phosphorylase B"/>
    <property type="match status" value="2"/>
</dbReference>
<dbReference type="InterPro" id="IPR002213">
    <property type="entry name" value="UDP_glucos_trans"/>
</dbReference>
<dbReference type="InterPro" id="IPR035595">
    <property type="entry name" value="UDP_glycos_trans_CS"/>
</dbReference>
<dbReference type="PANTHER" id="PTHR11926">
    <property type="entry name" value="GLUCOSYL/GLUCURONOSYL TRANSFERASES"/>
    <property type="match status" value="1"/>
</dbReference>
<dbReference type="PANTHER" id="PTHR11926:SF1500">
    <property type="entry name" value="INDOLE-3-ACETATE BETA-GLUCOSYLTRANSFERASE"/>
    <property type="match status" value="1"/>
</dbReference>
<dbReference type="Pfam" id="PF00201">
    <property type="entry name" value="UDPGT"/>
    <property type="match status" value="1"/>
</dbReference>
<dbReference type="SUPFAM" id="SSF53756">
    <property type="entry name" value="UDP-Glycosyltransferase/glycogen phosphorylase"/>
    <property type="match status" value="1"/>
</dbReference>
<dbReference type="PROSITE" id="PS00375">
    <property type="entry name" value="UDPGT"/>
    <property type="match status" value="1"/>
</dbReference>
<evidence type="ECO:0000250" key="1">
    <source>
        <dbReference type="UniProtKB" id="A0A0A1HA03"/>
    </source>
</evidence>
<evidence type="ECO:0000250" key="2">
    <source>
        <dbReference type="UniProtKB" id="P51094"/>
    </source>
</evidence>
<evidence type="ECO:0000305" key="3"/>
<protein>
    <recommendedName>
        <fullName>Indole-3-acetate beta-glucosyltransferase</fullName>
        <ecNumber>2.4.1.121</ecNumber>
    </recommendedName>
    <alternativeName>
        <fullName>(Uridine 5'-diphosphate-glucose:indol-3-ylacetyl)-beta-D-glucosyl transferase</fullName>
    </alternativeName>
    <alternativeName>
        <fullName>IAA-Glu synthase</fullName>
    </alternativeName>
</protein>
<proteinExistence type="evidence at protein level"/>
<sequence>MAPHVLVVPFPGQGHMNPMVQFAKRLASKGVATTLVTTRFIQRTADVDAHPAMVEAISDGHDEGGFASAAGVAEYLEKQAAAASASLASLVEARASSADAFTCVVYDSYEDWVLPVARRMGLPAVPFSTQSCAVSAVYYHFSQGRLAVPPGAAADGSDGGAGAAALSEAFLGLPEMERSELPSFVFDHGPYPTIAMQAIKQFAHAGKDDWVLFNSFEELETEVLAGLTKYLKARAIGPCVPLPTAGRTAGANGRITYGANLVKPEDACTKWLDTKPDRSVAYVSFGSLASLGNAQKEELARGLLAAGKPFLWVVRASDEHQVPRYLLAEATATGAAMVVPWCPQLDVLAHPAVGCFVTHCGWNSTLEALSFGVPMVAMALWTDQPTNARNVELAWGAGVRARRDAGAGVFLRGEVERCVRAVMDGGEAASAARKAAGEWRDRARAAVAPGGSSDRNLDEFVQFVRAGATEK</sequence>
<gene>
    <name type="primary">IAGLU</name>
</gene>
<reference key="1">
    <citation type="journal article" date="1994" name="Science">
        <title>Iaglu, a gene from Zea mays involved in conjugation of growth hormone indole-3-acetic acid.</title>
        <authorList>
            <person name="Szerszen J.B."/>
            <person name="Szczyglowski K."/>
            <person name="Bandurski R.S."/>
        </authorList>
    </citation>
    <scope>NUCLEOTIDE SEQUENCE [MRNA]</scope>
    <scope>PROTEIN SEQUENCE OF 1-18</scope>
    <source>
        <tissue>Endosperm</tissue>
    </source>
</reference>
<organism>
    <name type="scientific">Zea mays</name>
    <name type="common">Maize</name>
    <dbReference type="NCBI Taxonomy" id="4577"/>
    <lineage>
        <taxon>Eukaryota</taxon>
        <taxon>Viridiplantae</taxon>
        <taxon>Streptophyta</taxon>
        <taxon>Embryophyta</taxon>
        <taxon>Tracheophyta</taxon>
        <taxon>Spermatophyta</taxon>
        <taxon>Magnoliopsida</taxon>
        <taxon>Liliopsida</taxon>
        <taxon>Poales</taxon>
        <taxon>Poaceae</taxon>
        <taxon>PACMAD clade</taxon>
        <taxon>Panicoideae</taxon>
        <taxon>Andropogonodae</taxon>
        <taxon>Andropogoneae</taxon>
        <taxon>Tripsacinae</taxon>
        <taxon>Zea</taxon>
    </lineage>
</organism>
<keyword id="KW-0903">Direct protein sequencing</keyword>
<keyword id="KW-0328">Glycosyltransferase</keyword>
<keyword id="KW-1185">Reference proteome</keyword>
<keyword id="KW-0808">Transferase</keyword>
<accession>Q41819</accession>
<name>IABG_MAIZE</name>
<feature type="chain" id="PRO_0000074152" description="Indole-3-acetate beta-glucosyltransferase">
    <location>
        <begin position="1"/>
        <end position="471"/>
    </location>
</feature>
<feature type="active site" description="Proton acceptor" evidence="1">
    <location>
        <position position="15"/>
    </location>
</feature>
<feature type="active site" description="Charge relay" evidence="1">
    <location>
        <position position="107"/>
    </location>
</feature>
<feature type="binding site" evidence="2">
    <location>
        <position position="15"/>
    </location>
    <ligand>
        <name>an anthocyanidin</name>
        <dbReference type="ChEBI" id="CHEBI:143576"/>
    </ligand>
</feature>
<feature type="binding site" evidence="1">
    <location>
        <position position="129"/>
    </location>
    <ligand>
        <name>UDP-alpha-D-glucose</name>
        <dbReference type="ChEBI" id="CHEBI:58885"/>
    </ligand>
</feature>
<feature type="binding site" evidence="1">
    <location>
        <position position="344"/>
    </location>
    <ligand>
        <name>UDP-alpha-D-glucose</name>
        <dbReference type="ChEBI" id="CHEBI:58885"/>
    </ligand>
</feature>
<feature type="binding site" evidence="1">
    <location>
        <position position="359"/>
    </location>
    <ligand>
        <name>UDP-alpha-D-glucose</name>
        <dbReference type="ChEBI" id="CHEBI:58885"/>
    </ligand>
</feature>
<feature type="binding site" evidence="1">
    <location>
        <position position="362"/>
    </location>
    <ligand>
        <name>UDP-alpha-D-glucose</name>
        <dbReference type="ChEBI" id="CHEBI:58885"/>
    </ligand>
</feature>
<feature type="binding site" evidence="1">
    <location>
        <position position="363"/>
    </location>
    <ligand>
        <name>UDP-alpha-D-glucose</name>
        <dbReference type="ChEBI" id="CHEBI:58885"/>
    </ligand>
</feature>
<feature type="binding site" evidence="1">
    <location>
        <position position="364"/>
    </location>
    <ligand>
        <name>UDP-alpha-D-glucose</name>
        <dbReference type="ChEBI" id="CHEBI:58885"/>
    </ligand>
</feature>
<feature type="binding site" evidence="1">
    <location>
        <position position="367"/>
    </location>
    <ligand>
        <name>UDP-alpha-D-glucose</name>
        <dbReference type="ChEBI" id="CHEBI:58885"/>
    </ligand>
</feature>
<feature type="binding site" evidence="1">
    <location>
        <position position="383"/>
    </location>
    <ligand>
        <name>UDP-alpha-D-glucose</name>
        <dbReference type="ChEBI" id="CHEBI:58885"/>
    </ligand>
</feature>
<feature type="binding site" evidence="1">
    <location>
        <position position="384"/>
    </location>
    <ligand>
        <name>UDP-alpha-D-glucose</name>
        <dbReference type="ChEBI" id="CHEBI:58885"/>
    </ligand>
</feature>
<comment type="catalytic activity">
    <reaction>
        <text>(indol-3-yl)acetate + UDP-alpha-D-glucose = 1-O-(indol-3-ylacetyl)-beta-D-glucose + UDP</text>
        <dbReference type="Rhea" id="RHEA:14921"/>
        <dbReference type="ChEBI" id="CHEBI:17990"/>
        <dbReference type="ChEBI" id="CHEBI:30854"/>
        <dbReference type="ChEBI" id="CHEBI:58223"/>
        <dbReference type="ChEBI" id="CHEBI:58885"/>
        <dbReference type="EC" id="2.4.1.121"/>
    </reaction>
</comment>
<comment type="pathway">
    <text>Plant hormone metabolism; auxin conjugation.</text>
</comment>
<comment type="similarity">
    <text evidence="3">Belongs to the UDP-glycosyltransferase family.</text>
</comment>